<reference key="1">
    <citation type="journal article" date="2011" name="J. Bacteriol.">
        <title>Genome sequence of Microbacterium testaceum StLB037, an N-acylhomoserine lactone-degrading bacterium isolated from potato leaves.</title>
        <authorList>
            <person name="Morohoshi T."/>
            <person name="Wang W.Z."/>
            <person name="Someya N."/>
            <person name="Ikeda T."/>
        </authorList>
    </citation>
    <scope>NUCLEOTIDE SEQUENCE [LARGE SCALE GENOMIC DNA]</scope>
    <source>
        <strain>StLB037</strain>
    </source>
</reference>
<gene>
    <name evidence="1" type="primary">fgd</name>
    <name type="ordered locus">MTES_1878</name>
</gene>
<evidence type="ECO:0000255" key="1">
    <source>
        <dbReference type="HAMAP-Rule" id="MF_02123"/>
    </source>
</evidence>
<sequence>MTIPLRFGYKASSEQFGPNELLDFGVLAEEMGFDSVFLSDHLQPWMHDGGHAPNALPWLGALGARTERVIIGTSVLTPTFRYHPGVIAQVFATLGVMYPGRVVLGVGTGEALNEVTLGLEWPEAPERFQRLKEAITIINELWAGERVTYEGTYYSVKDATIYDRPEQKVPIYIGASGPAATRLAGRIAEGYITTSGKDPELYTEKLLPALDDGLSKAGRTRDDVDTLMEVKVSYHPDHDTALEKTRFWAPLALTAEEKMSVHDPIEMQRLANELPIERAASRFIVSTDPDEHVERIARYVDLGFRHLVFHDPGHDQEQFLRMYGEEILPRLRKRFA</sequence>
<keyword id="KW-0119">Carbohydrate metabolism</keyword>
<keyword id="KW-0560">Oxidoreductase</keyword>
<protein>
    <recommendedName>
        <fullName evidence="1">F420-dependent glucose-6-phosphate dehydrogenase</fullName>
        <shortName evidence="1">FGD</shortName>
        <shortName evidence="1">G6PD</shortName>
        <ecNumber evidence="1">1.1.98.2</ecNumber>
    </recommendedName>
</protein>
<comment type="function">
    <text evidence="1">Catalyzes the coenzyme F420-dependent oxidation of glucose 6-phosphate (G6P) to 6-phosphogluconolactone.</text>
</comment>
<comment type="catalytic activity">
    <reaction evidence="1">
        <text>oxidized coenzyme F420-(gamma-L-Glu)(n) + D-glucose 6-phosphate + H(+) = 6-phospho-D-glucono-1,5-lactone + reduced coenzyme F420-(gamma-L-Glu)(n)</text>
        <dbReference type="Rhea" id="RHEA:27294"/>
        <dbReference type="Rhea" id="RHEA-COMP:12939"/>
        <dbReference type="Rhea" id="RHEA-COMP:14378"/>
        <dbReference type="ChEBI" id="CHEBI:15378"/>
        <dbReference type="ChEBI" id="CHEBI:57955"/>
        <dbReference type="ChEBI" id="CHEBI:61548"/>
        <dbReference type="ChEBI" id="CHEBI:133980"/>
        <dbReference type="ChEBI" id="CHEBI:139511"/>
        <dbReference type="EC" id="1.1.98.2"/>
    </reaction>
</comment>
<comment type="subunit">
    <text evidence="1">Homodimer.</text>
</comment>
<comment type="similarity">
    <text evidence="1">Belongs to the F420-dependent glucose-6-phosphate dehydrogenase family.</text>
</comment>
<name>FGD_MICTS</name>
<accession>E8NCH3</accession>
<dbReference type="EC" id="1.1.98.2" evidence="1"/>
<dbReference type="EMBL" id="AP012052">
    <property type="protein sequence ID" value="BAJ74842.1"/>
    <property type="molecule type" value="Genomic_DNA"/>
</dbReference>
<dbReference type="RefSeq" id="WP_013584967.1">
    <property type="nucleotide sequence ID" value="NC_015125.1"/>
</dbReference>
<dbReference type="SMR" id="E8NCH3"/>
<dbReference type="STRING" id="979556.MTES_1878"/>
<dbReference type="KEGG" id="mts:MTES_1878"/>
<dbReference type="eggNOG" id="COG2141">
    <property type="taxonomic scope" value="Bacteria"/>
</dbReference>
<dbReference type="HOGENOM" id="CLU_027853_4_0_11"/>
<dbReference type="OrthoDB" id="180193at2"/>
<dbReference type="Proteomes" id="UP000008975">
    <property type="component" value="Chromosome"/>
</dbReference>
<dbReference type="GO" id="GO:0070967">
    <property type="term" value="F:coenzyme F420 binding"/>
    <property type="evidence" value="ECO:0007669"/>
    <property type="project" value="UniProtKB-UniRule"/>
</dbReference>
<dbReference type="GO" id="GO:0052749">
    <property type="term" value="F:glucose-6-phosphate dehydrogenase (coenzyme F420) activity"/>
    <property type="evidence" value="ECO:0007669"/>
    <property type="project" value="UniProtKB-EC"/>
</dbReference>
<dbReference type="GO" id="GO:0016705">
    <property type="term" value="F:oxidoreductase activity, acting on paired donors, with incorporation or reduction of molecular oxygen"/>
    <property type="evidence" value="ECO:0007669"/>
    <property type="project" value="InterPro"/>
</dbReference>
<dbReference type="GO" id="GO:0005975">
    <property type="term" value="P:carbohydrate metabolic process"/>
    <property type="evidence" value="ECO:0007669"/>
    <property type="project" value="UniProtKB-UniRule"/>
</dbReference>
<dbReference type="CDD" id="cd01097">
    <property type="entry name" value="Tetrahydromethanopterin_reductase"/>
    <property type="match status" value="1"/>
</dbReference>
<dbReference type="Gene3D" id="3.20.20.30">
    <property type="entry name" value="Luciferase-like domain"/>
    <property type="match status" value="1"/>
</dbReference>
<dbReference type="HAMAP" id="MF_02123">
    <property type="entry name" value="F420_G6P_DH"/>
    <property type="match status" value="1"/>
</dbReference>
<dbReference type="InterPro" id="IPR019944">
    <property type="entry name" value="F420-dep_G6P_DH"/>
</dbReference>
<dbReference type="InterPro" id="IPR050564">
    <property type="entry name" value="F420-G6PD/mer"/>
</dbReference>
<dbReference type="InterPro" id="IPR019945">
    <property type="entry name" value="F420_G6P_DH-rel"/>
</dbReference>
<dbReference type="InterPro" id="IPR011251">
    <property type="entry name" value="Luciferase-like_dom"/>
</dbReference>
<dbReference type="InterPro" id="IPR036661">
    <property type="entry name" value="Luciferase-like_sf"/>
</dbReference>
<dbReference type="NCBIfam" id="TIGR03554">
    <property type="entry name" value="F420_G6P_DH"/>
    <property type="match status" value="1"/>
</dbReference>
<dbReference type="NCBIfam" id="TIGR03557">
    <property type="entry name" value="F420_G6P_family"/>
    <property type="match status" value="1"/>
</dbReference>
<dbReference type="PANTHER" id="PTHR43244">
    <property type="match status" value="1"/>
</dbReference>
<dbReference type="PANTHER" id="PTHR43244:SF1">
    <property type="entry name" value="5,10-METHYLENETETRAHYDROMETHANOPTERIN REDUCTASE"/>
    <property type="match status" value="1"/>
</dbReference>
<dbReference type="Pfam" id="PF00296">
    <property type="entry name" value="Bac_luciferase"/>
    <property type="match status" value="1"/>
</dbReference>
<dbReference type="SUPFAM" id="SSF51679">
    <property type="entry name" value="Bacterial luciferase-like"/>
    <property type="match status" value="1"/>
</dbReference>
<organism>
    <name type="scientific">Microbacterium testaceum (strain StLB037)</name>
    <dbReference type="NCBI Taxonomy" id="979556"/>
    <lineage>
        <taxon>Bacteria</taxon>
        <taxon>Bacillati</taxon>
        <taxon>Actinomycetota</taxon>
        <taxon>Actinomycetes</taxon>
        <taxon>Micrococcales</taxon>
        <taxon>Microbacteriaceae</taxon>
        <taxon>Microbacterium</taxon>
    </lineage>
</organism>
<feature type="chain" id="PRO_0000413590" description="F420-dependent glucose-6-phosphate dehydrogenase">
    <location>
        <begin position="1"/>
        <end position="336"/>
    </location>
</feature>
<feature type="active site" description="Proton donor" evidence="1">
    <location>
        <position position="41"/>
    </location>
</feature>
<feature type="active site" description="Proton acceptor" evidence="1">
    <location>
        <position position="110"/>
    </location>
</feature>
<feature type="binding site" evidence="1">
    <location>
        <position position="40"/>
    </location>
    <ligand>
        <name>coenzyme F420-(gamma-Glu)n</name>
        <dbReference type="ChEBI" id="CHEBI:133980"/>
    </ligand>
</feature>
<feature type="binding site" evidence="1">
    <location>
        <position position="77"/>
    </location>
    <ligand>
        <name>coenzyme F420-(gamma-Glu)n</name>
        <dbReference type="ChEBI" id="CHEBI:133980"/>
    </ligand>
</feature>
<feature type="binding site" evidence="1">
    <location>
        <begin position="108"/>
        <end position="109"/>
    </location>
    <ligand>
        <name>coenzyme F420-(gamma-Glu)n</name>
        <dbReference type="ChEBI" id="CHEBI:133980"/>
    </ligand>
</feature>
<feature type="binding site" evidence="1">
    <location>
        <position position="113"/>
    </location>
    <ligand>
        <name>coenzyme F420-(gamma-Glu)n</name>
        <dbReference type="ChEBI" id="CHEBI:133980"/>
    </ligand>
</feature>
<feature type="binding site" evidence="1">
    <location>
        <begin position="176"/>
        <end position="177"/>
    </location>
    <ligand>
        <name>coenzyme F420-(gamma-Glu)n</name>
        <dbReference type="ChEBI" id="CHEBI:133980"/>
    </ligand>
</feature>
<feature type="binding site" evidence="1">
    <location>
        <begin position="179"/>
        <end position="180"/>
    </location>
    <ligand>
        <name>coenzyme F420-(gamma-Glu)n</name>
        <dbReference type="ChEBI" id="CHEBI:133980"/>
    </ligand>
</feature>
<feature type="binding site" evidence="1">
    <location>
        <position position="194"/>
    </location>
    <ligand>
        <name>substrate</name>
    </ligand>
</feature>
<feature type="binding site" evidence="1">
    <location>
        <position position="197"/>
    </location>
    <ligand>
        <name>substrate</name>
    </ligand>
</feature>
<feature type="binding site" evidence="1">
    <location>
        <position position="258"/>
    </location>
    <ligand>
        <name>substrate</name>
    </ligand>
</feature>
<feature type="binding site" evidence="1">
    <location>
        <position position="282"/>
    </location>
    <ligand>
        <name>substrate</name>
    </ligand>
</feature>
<proteinExistence type="inferred from homology"/>